<protein>
    <recommendedName>
        <fullName evidence="1">Methylenetetrahydrofolate--tRNA-(uracil-5-)-methyltransferase TrmFO</fullName>
        <ecNumber evidence="1">2.1.1.74</ecNumber>
    </recommendedName>
    <alternativeName>
        <fullName evidence="1">Folate-dependent tRNA (uracil-5-)-methyltransferase</fullName>
    </alternativeName>
    <alternativeName>
        <fullName evidence="1">Folate-dependent tRNA(M-5-U54)-methyltransferase</fullName>
    </alternativeName>
</protein>
<sequence length="435" mass="49659">MVVNVIGAGLAGSEVVYNLGKRGVKVRLYEMRPKKMTEVHKTGYFAELVCSNSFKSEEVTNAEGLLKAEMKMMGSVVLEVAERTRVPSGKALAVDRNAFARKVTEIIEDMENVEIVREEVTSFNPDEGIWIVATGPATSEGLLSFLKELLGEDFLFFFDAVSPIVSFESIDMSRAFWGDRFGKGNDYINCPLTQEEYEELWKALVEAEVIEMEDFDRSLLFERCQPVEEIARSGKDALRYGPLRPTGLVDPRTGKEPYAVVQLRREDKEGKFYSLVGFQTRLKWGEQKKVIQKIPCLRNAEIVRYGVMHRNIYINSPRVLDPFFRLKKHPSVFFAGQITGVEGYMESAASGIYVAYNVYRILRGLSPLRLPEETMMGALFSYIIEKVEGDLKPMYANFGLLPPLSVRVRNKFERRKRLAERAMKAMREFLEKNPW</sequence>
<gene>
    <name evidence="1" type="primary">trmFO</name>
    <name type="ordered locus">CTN_1850</name>
</gene>
<comment type="function">
    <text evidence="1">Catalyzes the folate-dependent formation of 5-methyl-uridine at position 54 (M-5-U54) in all tRNAs.</text>
</comment>
<comment type="catalytic activity">
    <reaction evidence="1">
        <text>uridine(54) in tRNA + (6R)-5,10-methylene-5,6,7,8-tetrahydrofolate + NADH + H(+) = 5-methyluridine(54) in tRNA + (6S)-5,6,7,8-tetrahydrofolate + NAD(+)</text>
        <dbReference type="Rhea" id="RHEA:16873"/>
        <dbReference type="Rhea" id="RHEA-COMP:10167"/>
        <dbReference type="Rhea" id="RHEA-COMP:10193"/>
        <dbReference type="ChEBI" id="CHEBI:15378"/>
        <dbReference type="ChEBI" id="CHEBI:15636"/>
        <dbReference type="ChEBI" id="CHEBI:57453"/>
        <dbReference type="ChEBI" id="CHEBI:57540"/>
        <dbReference type="ChEBI" id="CHEBI:57945"/>
        <dbReference type="ChEBI" id="CHEBI:65315"/>
        <dbReference type="ChEBI" id="CHEBI:74447"/>
        <dbReference type="EC" id="2.1.1.74"/>
    </reaction>
</comment>
<comment type="catalytic activity">
    <reaction evidence="1">
        <text>uridine(54) in tRNA + (6R)-5,10-methylene-5,6,7,8-tetrahydrofolate + NADPH + H(+) = 5-methyluridine(54) in tRNA + (6S)-5,6,7,8-tetrahydrofolate + NADP(+)</text>
        <dbReference type="Rhea" id="RHEA:62372"/>
        <dbReference type="Rhea" id="RHEA-COMP:10167"/>
        <dbReference type="Rhea" id="RHEA-COMP:10193"/>
        <dbReference type="ChEBI" id="CHEBI:15378"/>
        <dbReference type="ChEBI" id="CHEBI:15636"/>
        <dbReference type="ChEBI" id="CHEBI:57453"/>
        <dbReference type="ChEBI" id="CHEBI:57783"/>
        <dbReference type="ChEBI" id="CHEBI:58349"/>
        <dbReference type="ChEBI" id="CHEBI:65315"/>
        <dbReference type="ChEBI" id="CHEBI:74447"/>
        <dbReference type="EC" id="2.1.1.74"/>
    </reaction>
</comment>
<comment type="cofactor">
    <cofactor evidence="1">
        <name>FAD</name>
        <dbReference type="ChEBI" id="CHEBI:57692"/>
    </cofactor>
</comment>
<comment type="subcellular location">
    <subcellularLocation>
        <location evidence="1">Cytoplasm</location>
    </subcellularLocation>
</comment>
<comment type="similarity">
    <text evidence="1">Belongs to the MnmG family. TrmFO subfamily.</text>
</comment>
<feature type="chain" id="PRO_1000149484" description="Methylenetetrahydrofolate--tRNA-(uracil-5-)-methyltransferase TrmFO">
    <location>
        <begin position="1"/>
        <end position="435"/>
    </location>
</feature>
<feature type="binding site" evidence="1">
    <location>
        <begin position="7"/>
        <end position="12"/>
    </location>
    <ligand>
        <name>FAD</name>
        <dbReference type="ChEBI" id="CHEBI:57692"/>
    </ligand>
</feature>
<evidence type="ECO:0000255" key="1">
    <source>
        <dbReference type="HAMAP-Rule" id="MF_01037"/>
    </source>
</evidence>
<proteinExistence type="inferred from homology"/>
<organism>
    <name type="scientific">Thermotoga neapolitana (strain ATCC 49049 / DSM 4359 / NBRC 107923 / NS-E)</name>
    <dbReference type="NCBI Taxonomy" id="309803"/>
    <lineage>
        <taxon>Bacteria</taxon>
        <taxon>Thermotogati</taxon>
        <taxon>Thermotogota</taxon>
        <taxon>Thermotogae</taxon>
        <taxon>Thermotogales</taxon>
        <taxon>Thermotogaceae</taxon>
        <taxon>Thermotoga</taxon>
    </lineage>
</organism>
<accession>B9KAP3</accession>
<keyword id="KW-0963">Cytoplasm</keyword>
<keyword id="KW-0274">FAD</keyword>
<keyword id="KW-0285">Flavoprotein</keyword>
<keyword id="KW-0489">Methyltransferase</keyword>
<keyword id="KW-0520">NAD</keyword>
<keyword id="KW-0521">NADP</keyword>
<keyword id="KW-0808">Transferase</keyword>
<keyword id="KW-0819">tRNA processing</keyword>
<reference key="1">
    <citation type="submission" date="2007-11" db="EMBL/GenBank/DDBJ databases">
        <title>The genome sequence of the hyperthermophilic bacterium Thermotoga neapolitana.</title>
        <authorList>
            <person name="Lim S.K."/>
            <person name="Kim J.S."/>
            <person name="Cha S.H."/>
            <person name="Park B.C."/>
            <person name="Lee D.S."/>
            <person name="Tae H.S."/>
            <person name="Kim S.-J."/>
            <person name="Kim J.J."/>
            <person name="Park K.J."/>
            <person name="Lee S.Y."/>
        </authorList>
    </citation>
    <scope>NUCLEOTIDE SEQUENCE [LARGE SCALE GENOMIC DNA]</scope>
    <source>
        <strain>ATCC 49049 / DSM 4359 / NBRC 107923 / NS-E</strain>
    </source>
</reference>
<name>TRMFO_THENN</name>
<dbReference type="EC" id="2.1.1.74" evidence="1"/>
<dbReference type="EMBL" id="CP000916">
    <property type="protein sequence ID" value="ACM24026.1"/>
    <property type="molecule type" value="Genomic_DNA"/>
</dbReference>
<dbReference type="RefSeq" id="WP_015920262.1">
    <property type="nucleotide sequence ID" value="NC_011978.1"/>
</dbReference>
<dbReference type="SMR" id="B9KAP3"/>
<dbReference type="STRING" id="309803.CTN_1850"/>
<dbReference type="KEGG" id="tna:CTN_1850"/>
<dbReference type="eggNOG" id="COG1206">
    <property type="taxonomic scope" value="Bacteria"/>
</dbReference>
<dbReference type="HOGENOM" id="CLU_033057_1_0_0"/>
<dbReference type="Proteomes" id="UP000000445">
    <property type="component" value="Chromosome"/>
</dbReference>
<dbReference type="GO" id="GO:0005829">
    <property type="term" value="C:cytosol"/>
    <property type="evidence" value="ECO:0007669"/>
    <property type="project" value="TreeGrafter"/>
</dbReference>
<dbReference type="GO" id="GO:0050660">
    <property type="term" value="F:flavin adenine dinucleotide binding"/>
    <property type="evidence" value="ECO:0007669"/>
    <property type="project" value="UniProtKB-UniRule"/>
</dbReference>
<dbReference type="GO" id="GO:0047151">
    <property type="term" value="F:tRNA (uracil(54)-C5)-methyltransferase activity, 5,10-methylenetetrahydrofolate-dependent"/>
    <property type="evidence" value="ECO:0007669"/>
    <property type="project" value="UniProtKB-UniRule"/>
</dbReference>
<dbReference type="GO" id="GO:0030488">
    <property type="term" value="P:tRNA methylation"/>
    <property type="evidence" value="ECO:0007669"/>
    <property type="project" value="TreeGrafter"/>
</dbReference>
<dbReference type="GO" id="GO:0002098">
    <property type="term" value="P:tRNA wobble uridine modification"/>
    <property type="evidence" value="ECO:0007669"/>
    <property type="project" value="TreeGrafter"/>
</dbReference>
<dbReference type="FunFam" id="3.50.50.60:FF:000359">
    <property type="entry name" value="Methylenetetrahydrofolate--tRNA-(uracil-5-)-methyltransferase TrmFO"/>
    <property type="match status" value="1"/>
</dbReference>
<dbReference type="FunFam" id="3.50.50.60:FF:000412">
    <property type="entry name" value="Methylenetetrahydrofolate--tRNA-(uracil-5-)-methyltransferase TrmFO"/>
    <property type="match status" value="1"/>
</dbReference>
<dbReference type="Gene3D" id="3.50.50.60">
    <property type="entry name" value="FAD/NAD(P)-binding domain"/>
    <property type="match status" value="2"/>
</dbReference>
<dbReference type="HAMAP" id="MF_01037">
    <property type="entry name" value="TrmFO"/>
    <property type="match status" value="1"/>
</dbReference>
<dbReference type="InterPro" id="IPR036188">
    <property type="entry name" value="FAD/NAD-bd_sf"/>
</dbReference>
<dbReference type="InterPro" id="IPR002218">
    <property type="entry name" value="MnmG-rel"/>
</dbReference>
<dbReference type="InterPro" id="IPR040131">
    <property type="entry name" value="MnmG_N"/>
</dbReference>
<dbReference type="InterPro" id="IPR004417">
    <property type="entry name" value="TrmFO"/>
</dbReference>
<dbReference type="NCBIfam" id="TIGR00137">
    <property type="entry name" value="gid_trmFO"/>
    <property type="match status" value="1"/>
</dbReference>
<dbReference type="NCBIfam" id="NF003739">
    <property type="entry name" value="PRK05335.1"/>
    <property type="match status" value="1"/>
</dbReference>
<dbReference type="PANTHER" id="PTHR11806">
    <property type="entry name" value="GLUCOSE INHIBITED DIVISION PROTEIN A"/>
    <property type="match status" value="1"/>
</dbReference>
<dbReference type="PANTHER" id="PTHR11806:SF2">
    <property type="entry name" value="METHYLENETETRAHYDROFOLATE--TRNA-(URACIL-5-)-METHYLTRANSFERASE TRMFO"/>
    <property type="match status" value="1"/>
</dbReference>
<dbReference type="Pfam" id="PF01134">
    <property type="entry name" value="GIDA"/>
    <property type="match status" value="1"/>
</dbReference>
<dbReference type="SUPFAM" id="SSF51905">
    <property type="entry name" value="FAD/NAD(P)-binding domain"/>
    <property type="match status" value="1"/>
</dbReference>